<feature type="chain" id="PRO_1000013209" description="UDP-3-O-acyl-N-acetylglucosamine deacetylase">
    <location>
        <begin position="1"/>
        <end position="305"/>
    </location>
</feature>
<feature type="active site" description="Proton donor" evidence="1">
    <location>
        <position position="265"/>
    </location>
</feature>
<feature type="binding site" evidence="1">
    <location>
        <position position="79"/>
    </location>
    <ligand>
        <name>Zn(2+)</name>
        <dbReference type="ChEBI" id="CHEBI:29105"/>
    </ligand>
</feature>
<feature type="binding site" evidence="1">
    <location>
        <position position="238"/>
    </location>
    <ligand>
        <name>Zn(2+)</name>
        <dbReference type="ChEBI" id="CHEBI:29105"/>
    </ligand>
</feature>
<feature type="binding site" evidence="1">
    <location>
        <position position="242"/>
    </location>
    <ligand>
        <name>Zn(2+)</name>
        <dbReference type="ChEBI" id="CHEBI:29105"/>
    </ligand>
</feature>
<keyword id="KW-0378">Hydrolase</keyword>
<keyword id="KW-0441">Lipid A biosynthesis</keyword>
<keyword id="KW-0444">Lipid biosynthesis</keyword>
<keyword id="KW-0443">Lipid metabolism</keyword>
<keyword id="KW-0479">Metal-binding</keyword>
<keyword id="KW-0862">Zinc</keyword>
<gene>
    <name evidence="1" type="primary">lpxC</name>
    <name type="ordered locus">HS_0364</name>
</gene>
<comment type="function">
    <text evidence="1">Catalyzes the hydrolysis of UDP-3-O-myristoyl-N-acetylglucosamine to form UDP-3-O-myristoylglucosamine and acetate, the committed step in lipid A biosynthesis.</text>
</comment>
<comment type="catalytic activity">
    <reaction evidence="1">
        <text>a UDP-3-O-[(3R)-3-hydroxyacyl]-N-acetyl-alpha-D-glucosamine + H2O = a UDP-3-O-[(3R)-3-hydroxyacyl]-alpha-D-glucosamine + acetate</text>
        <dbReference type="Rhea" id="RHEA:67816"/>
        <dbReference type="ChEBI" id="CHEBI:15377"/>
        <dbReference type="ChEBI" id="CHEBI:30089"/>
        <dbReference type="ChEBI" id="CHEBI:137740"/>
        <dbReference type="ChEBI" id="CHEBI:173225"/>
        <dbReference type="EC" id="3.5.1.108"/>
    </reaction>
</comment>
<comment type="cofactor">
    <cofactor evidence="1">
        <name>Zn(2+)</name>
        <dbReference type="ChEBI" id="CHEBI:29105"/>
    </cofactor>
</comment>
<comment type="pathway">
    <text evidence="1">Glycolipid biosynthesis; lipid IV(A) biosynthesis; lipid IV(A) from (3R)-3-hydroxytetradecanoyl-[acyl-carrier-protein] and UDP-N-acetyl-alpha-D-glucosamine: step 2/6.</text>
</comment>
<comment type="similarity">
    <text evidence="1">Belongs to the LpxC family.</text>
</comment>
<accession>Q0I1C7</accession>
<name>LPXC_HISS1</name>
<protein>
    <recommendedName>
        <fullName evidence="1">UDP-3-O-acyl-N-acetylglucosamine deacetylase</fullName>
        <shortName evidence="1">UDP-3-O-acyl-GlcNAc deacetylase</shortName>
        <ecNumber evidence="1">3.5.1.108</ecNumber>
    </recommendedName>
    <alternativeName>
        <fullName evidence="1">UDP-3-O-[R-3-hydroxymyristoyl]-N-acetylglucosamine deacetylase</fullName>
    </alternativeName>
</protein>
<proteinExistence type="inferred from homology"/>
<organism>
    <name type="scientific">Histophilus somni (strain 129Pt)</name>
    <name type="common">Haemophilus somnus</name>
    <dbReference type="NCBI Taxonomy" id="205914"/>
    <lineage>
        <taxon>Bacteria</taxon>
        <taxon>Pseudomonadati</taxon>
        <taxon>Pseudomonadota</taxon>
        <taxon>Gammaproteobacteria</taxon>
        <taxon>Pasteurellales</taxon>
        <taxon>Pasteurellaceae</taxon>
        <taxon>Histophilus</taxon>
    </lineage>
</organism>
<dbReference type="EC" id="3.5.1.108" evidence="1"/>
<dbReference type="EMBL" id="CP000436">
    <property type="protein sequence ID" value="ABI24642.1"/>
    <property type="molecule type" value="Genomic_DNA"/>
</dbReference>
<dbReference type="SMR" id="Q0I1C7"/>
<dbReference type="KEGG" id="hso:HS_0364"/>
<dbReference type="eggNOG" id="COG0774">
    <property type="taxonomic scope" value="Bacteria"/>
</dbReference>
<dbReference type="HOGENOM" id="CLU_046528_1_0_6"/>
<dbReference type="UniPathway" id="UPA00359">
    <property type="reaction ID" value="UER00478"/>
</dbReference>
<dbReference type="GO" id="GO:0016020">
    <property type="term" value="C:membrane"/>
    <property type="evidence" value="ECO:0007669"/>
    <property type="project" value="GOC"/>
</dbReference>
<dbReference type="GO" id="GO:0046872">
    <property type="term" value="F:metal ion binding"/>
    <property type="evidence" value="ECO:0007669"/>
    <property type="project" value="UniProtKB-KW"/>
</dbReference>
<dbReference type="GO" id="GO:0103117">
    <property type="term" value="F:UDP-3-O-acyl-N-acetylglucosamine deacetylase activity"/>
    <property type="evidence" value="ECO:0007669"/>
    <property type="project" value="UniProtKB-UniRule"/>
</dbReference>
<dbReference type="GO" id="GO:0009245">
    <property type="term" value="P:lipid A biosynthetic process"/>
    <property type="evidence" value="ECO:0007669"/>
    <property type="project" value="UniProtKB-UniRule"/>
</dbReference>
<dbReference type="FunFam" id="3.30.1700.10:FF:000001">
    <property type="entry name" value="UDP-3-O-acyl-N-acetylglucosamine deacetylase"/>
    <property type="match status" value="1"/>
</dbReference>
<dbReference type="FunFam" id="3.30.230.20:FF:000001">
    <property type="entry name" value="UDP-3-O-acyl-N-acetylglucosamine deacetylase"/>
    <property type="match status" value="1"/>
</dbReference>
<dbReference type="Gene3D" id="3.30.230.20">
    <property type="entry name" value="lpxc deacetylase, domain 1"/>
    <property type="match status" value="1"/>
</dbReference>
<dbReference type="Gene3D" id="3.30.1700.10">
    <property type="entry name" value="lpxc deacetylase, domain 2"/>
    <property type="match status" value="1"/>
</dbReference>
<dbReference type="HAMAP" id="MF_00388">
    <property type="entry name" value="LpxC"/>
    <property type="match status" value="1"/>
</dbReference>
<dbReference type="InterPro" id="IPR020568">
    <property type="entry name" value="Ribosomal_Su5_D2-typ_SF"/>
</dbReference>
<dbReference type="InterPro" id="IPR004463">
    <property type="entry name" value="UDP-acyl_GlcNac_deAcase"/>
</dbReference>
<dbReference type="InterPro" id="IPR011334">
    <property type="entry name" value="UDP-acyl_GlcNac_deAcase_C"/>
</dbReference>
<dbReference type="InterPro" id="IPR015870">
    <property type="entry name" value="UDP-acyl_N-AcGlcN_deAcase_N"/>
</dbReference>
<dbReference type="NCBIfam" id="TIGR00325">
    <property type="entry name" value="lpxC"/>
    <property type="match status" value="1"/>
</dbReference>
<dbReference type="PANTHER" id="PTHR33694">
    <property type="entry name" value="UDP-3-O-ACYL-N-ACETYLGLUCOSAMINE DEACETYLASE 1, MITOCHONDRIAL-RELATED"/>
    <property type="match status" value="1"/>
</dbReference>
<dbReference type="PANTHER" id="PTHR33694:SF1">
    <property type="entry name" value="UDP-3-O-ACYL-N-ACETYLGLUCOSAMINE DEACETYLASE 1, MITOCHONDRIAL-RELATED"/>
    <property type="match status" value="1"/>
</dbReference>
<dbReference type="Pfam" id="PF03331">
    <property type="entry name" value="LpxC"/>
    <property type="match status" value="1"/>
</dbReference>
<dbReference type="SUPFAM" id="SSF54211">
    <property type="entry name" value="Ribosomal protein S5 domain 2-like"/>
    <property type="match status" value="2"/>
</dbReference>
<sequence>MIKQRTLKQSIKVTGVGLHSGNKVTLTLRPAMPNTGVIYCRTDMNPPVTFPANANAVRDTMLCTCLINEDGVRISTVEHLNAALAGLGIDNIIIEVDAPEIPIMDGSASPFIYLLLDAGIEEQNVAKKFIRVKKPIRIEDGDKWAEFKPYDGFRLDFTIDFEHPAIGKDVRNYVMDFSAQAFVQQISRARTFGFMKDIEYLQSQGLALGGSLDNAIVLDDYRILNEDGLRFKDELVRHKMLDAIGDLYMCGYNIIGDFKAYKSGHGLNNKLLRALLENQEAWEFVSFEDKEEIPQGYVSPAQVFI</sequence>
<evidence type="ECO:0000255" key="1">
    <source>
        <dbReference type="HAMAP-Rule" id="MF_00388"/>
    </source>
</evidence>
<reference key="1">
    <citation type="journal article" date="2007" name="J. Bacteriol.">
        <title>Complete genome sequence of Haemophilus somnus (Histophilus somni) strain 129Pt and comparison to Haemophilus ducreyi 35000HP and Haemophilus influenzae Rd.</title>
        <authorList>
            <person name="Challacombe J.F."/>
            <person name="Duncan A.J."/>
            <person name="Brettin T.S."/>
            <person name="Bruce D."/>
            <person name="Chertkov O."/>
            <person name="Detter J.C."/>
            <person name="Han C.S."/>
            <person name="Misra M."/>
            <person name="Richardson P."/>
            <person name="Tapia R."/>
            <person name="Thayer N."/>
            <person name="Xie G."/>
            <person name="Inzana T.J."/>
        </authorList>
    </citation>
    <scope>NUCLEOTIDE SEQUENCE [LARGE SCALE GENOMIC DNA]</scope>
    <source>
        <strain>129Pt</strain>
    </source>
</reference>